<reference key="1">
    <citation type="journal article" date="2008" name="BMC Genomics">
        <title>Comparative genomic analysis of the gut bacterium Bifidobacterium longum reveals loci susceptible to deletion during pure culture growth.</title>
        <authorList>
            <person name="Lee J.H."/>
            <person name="Karamychev V.N."/>
            <person name="Kozyavkin S.A."/>
            <person name="Mills D."/>
            <person name="Pavlov A.R."/>
            <person name="Pavlova N.V."/>
            <person name="Polouchine N.N."/>
            <person name="Richardson P.M."/>
            <person name="Shakhova V.V."/>
            <person name="Slesarev A.I."/>
            <person name="Weimer B."/>
            <person name="O'Sullivan D.J."/>
        </authorList>
    </citation>
    <scope>NUCLEOTIDE SEQUENCE [LARGE SCALE GENOMIC DNA]</scope>
    <source>
        <strain>DJO10A</strain>
    </source>
</reference>
<dbReference type="EC" id="2.1.1.199" evidence="1"/>
<dbReference type="EMBL" id="CP000605">
    <property type="protein sequence ID" value="ACD97619.1"/>
    <property type="molecule type" value="Genomic_DNA"/>
</dbReference>
<dbReference type="RefSeq" id="WP_007052542.1">
    <property type="nucleotide sequence ID" value="NZ_AABM02000003.1"/>
</dbReference>
<dbReference type="SMR" id="B3DQM3"/>
<dbReference type="GeneID" id="69578500"/>
<dbReference type="KEGG" id="blj:BLD_0173"/>
<dbReference type="HOGENOM" id="CLU_038422_0_0_11"/>
<dbReference type="Proteomes" id="UP000002419">
    <property type="component" value="Chromosome"/>
</dbReference>
<dbReference type="GO" id="GO:0005737">
    <property type="term" value="C:cytoplasm"/>
    <property type="evidence" value="ECO:0007669"/>
    <property type="project" value="UniProtKB-SubCell"/>
</dbReference>
<dbReference type="GO" id="GO:0071424">
    <property type="term" value="F:rRNA (cytosine-N4-)-methyltransferase activity"/>
    <property type="evidence" value="ECO:0007669"/>
    <property type="project" value="UniProtKB-UniRule"/>
</dbReference>
<dbReference type="GO" id="GO:0070475">
    <property type="term" value="P:rRNA base methylation"/>
    <property type="evidence" value="ECO:0007669"/>
    <property type="project" value="UniProtKB-UniRule"/>
</dbReference>
<dbReference type="CDD" id="cd02440">
    <property type="entry name" value="AdoMet_MTases"/>
    <property type="match status" value="1"/>
</dbReference>
<dbReference type="FunFam" id="1.10.150.170:FF:000001">
    <property type="entry name" value="Ribosomal RNA small subunit methyltransferase H"/>
    <property type="match status" value="1"/>
</dbReference>
<dbReference type="Gene3D" id="1.10.150.170">
    <property type="entry name" value="Putative methyltransferase TM0872, insert domain"/>
    <property type="match status" value="1"/>
</dbReference>
<dbReference type="Gene3D" id="3.40.50.150">
    <property type="entry name" value="Vaccinia Virus protein VP39"/>
    <property type="match status" value="1"/>
</dbReference>
<dbReference type="HAMAP" id="MF_01007">
    <property type="entry name" value="16SrRNA_methyltr_H"/>
    <property type="match status" value="1"/>
</dbReference>
<dbReference type="InterPro" id="IPR002903">
    <property type="entry name" value="RsmH"/>
</dbReference>
<dbReference type="InterPro" id="IPR023397">
    <property type="entry name" value="SAM-dep_MeTrfase_MraW_recog"/>
</dbReference>
<dbReference type="InterPro" id="IPR029063">
    <property type="entry name" value="SAM-dependent_MTases_sf"/>
</dbReference>
<dbReference type="NCBIfam" id="TIGR00006">
    <property type="entry name" value="16S rRNA (cytosine(1402)-N(4))-methyltransferase RsmH"/>
    <property type="match status" value="1"/>
</dbReference>
<dbReference type="PANTHER" id="PTHR11265:SF0">
    <property type="entry name" value="12S RRNA N4-METHYLCYTIDINE METHYLTRANSFERASE"/>
    <property type="match status" value="1"/>
</dbReference>
<dbReference type="PANTHER" id="PTHR11265">
    <property type="entry name" value="S-ADENOSYL-METHYLTRANSFERASE MRAW"/>
    <property type="match status" value="1"/>
</dbReference>
<dbReference type="Pfam" id="PF01795">
    <property type="entry name" value="Methyltransf_5"/>
    <property type="match status" value="1"/>
</dbReference>
<dbReference type="PIRSF" id="PIRSF004486">
    <property type="entry name" value="MraW"/>
    <property type="match status" value="1"/>
</dbReference>
<dbReference type="SUPFAM" id="SSF81799">
    <property type="entry name" value="Putative methyltransferase TM0872, insert domain"/>
    <property type="match status" value="1"/>
</dbReference>
<dbReference type="SUPFAM" id="SSF53335">
    <property type="entry name" value="S-adenosyl-L-methionine-dependent methyltransferases"/>
    <property type="match status" value="1"/>
</dbReference>
<keyword id="KW-0963">Cytoplasm</keyword>
<keyword id="KW-0489">Methyltransferase</keyword>
<keyword id="KW-0698">rRNA processing</keyword>
<keyword id="KW-0949">S-adenosyl-L-methionine</keyword>
<keyword id="KW-0808">Transferase</keyword>
<accession>B3DQM3</accession>
<evidence type="ECO:0000255" key="1">
    <source>
        <dbReference type="HAMAP-Rule" id="MF_01007"/>
    </source>
</evidence>
<evidence type="ECO:0000256" key="2">
    <source>
        <dbReference type="SAM" id="MobiDB-lite"/>
    </source>
</evidence>
<gene>
    <name evidence="1" type="primary">rsmH</name>
    <name type="synonym">mraW</name>
    <name type="ordered locus">BLD_0173</name>
</gene>
<sequence length="359" mass="39659">MVDVANIHLPVLLDDCVNLMAPALEHENAIAVDCTLGLAGHSIAFLKAAPQARLIGIDRDSEALGLATERMEREGLADRFIPVHAAFDQLDQVLADQDIERVDAVFMDLGLSSLQIDETDRGFSYSHDAPLDMRMDVSQPLTAERILATYDAAELVRIFKEYGEERFSRQIARAIVARRDKEPFTTTAQLNRLVDEVVPQAHRPAGNPAKRVFQALRIEVNGELDKLASTLPQAANRLHVGGRLVVESYHSLEDKTVKSFMAQGLRVDVPAGLPVIPPDAQPFFTDLTRGAIKADEHEIAANPRSASVRLRAVEVSREIPSRWRKRFTQTAQGLNDVKIQGSASPGRAKNTARIRTRRG</sequence>
<name>RSMH_BIFLD</name>
<protein>
    <recommendedName>
        <fullName evidence="1">Ribosomal RNA small subunit methyltransferase H</fullName>
        <ecNumber evidence="1">2.1.1.199</ecNumber>
    </recommendedName>
    <alternativeName>
        <fullName evidence="1">16S rRNA m(4)C1402 methyltransferase</fullName>
    </alternativeName>
    <alternativeName>
        <fullName evidence="1">rRNA (cytosine-N(4)-)-methyltransferase RsmH</fullName>
    </alternativeName>
</protein>
<comment type="function">
    <text evidence="1">Specifically methylates the N4 position of cytidine in position 1402 (C1402) of 16S rRNA.</text>
</comment>
<comment type="catalytic activity">
    <reaction evidence="1">
        <text>cytidine(1402) in 16S rRNA + S-adenosyl-L-methionine = N(4)-methylcytidine(1402) in 16S rRNA + S-adenosyl-L-homocysteine + H(+)</text>
        <dbReference type="Rhea" id="RHEA:42928"/>
        <dbReference type="Rhea" id="RHEA-COMP:10286"/>
        <dbReference type="Rhea" id="RHEA-COMP:10287"/>
        <dbReference type="ChEBI" id="CHEBI:15378"/>
        <dbReference type="ChEBI" id="CHEBI:57856"/>
        <dbReference type="ChEBI" id="CHEBI:59789"/>
        <dbReference type="ChEBI" id="CHEBI:74506"/>
        <dbReference type="ChEBI" id="CHEBI:82748"/>
        <dbReference type="EC" id="2.1.1.199"/>
    </reaction>
</comment>
<comment type="subcellular location">
    <subcellularLocation>
        <location evidence="1">Cytoplasm</location>
    </subcellularLocation>
</comment>
<comment type="similarity">
    <text evidence="1">Belongs to the methyltransferase superfamily. RsmH family.</text>
</comment>
<organism>
    <name type="scientific">Bifidobacterium longum (strain DJO10A)</name>
    <dbReference type="NCBI Taxonomy" id="205913"/>
    <lineage>
        <taxon>Bacteria</taxon>
        <taxon>Bacillati</taxon>
        <taxon>Actinomycetota</taxon>
        <taxon>Actinomycetes</taxon>
        <taxon>Bifidobacteriales</taxon>
        <taxon>Bifidobacteriaceae</taxon>
        <taxon>Bifidobacterium</taxon>
    </lineage>
</organism>
<proteinExistence type="inferred from homology"/>
<feature type="chain" id="PRO_0000386749" description="Ribosomal RNA small subunit methyltransferase H">
    <location>
        <begin position="1"/>
        <end position="359"/>
    </location>
</feature>
<feature type="region of interest" description="Disordered" evidence="2">
    <location>
        <begin position="339"/>
        <end position="359"/>
    </location>
</feature>
<feature type="compositionally biased region" description="Basic residues" evidence="2">
    <location>
        <begin position="350"/>
        <end position="359"/>
    </location>
</feature>
<feature type="binding site" evidence="1">
    <location>
        <begin position="39"/>
        <end position="41"/>
    </location>
    <ligand>
        <name>S-adenosyl-L-methionine</name>
        <dbReference type="ChEBI" id="CHEBI:59789"/>
    </ligand>
</feature>
<feature type="binding site" evidence="1">
    <location>
        <position position="58"/>
    </location>
    <ligand>
        <name>S-adenosyl-L-methionine</name>
        <dbReference type="ChEBI" id="CHEBI:59789"/>
    </ligand>
</feature>
<feature type="binding site" evidence="1">
    <location>
        <position position="87"/>
    </location>
    <ligand>
        <name>S-adenosyl-L-methionine</name>
        <dbReference type="ChEBI" id="CHEBI:59789"/>
    </ligand>
</feature>
<feature type="binding site" evidence="1">
    <location>
        <position position="108"/>
    </location>
    <ligand>
        <name>S-adenosyl-L-methionine</name>
        <dbReference type="ChEBI" id="CHEBI:59789"/>
    </ligand>
</feature>
<feature type="binding site" evidence="1">
    <location>
        <position position="115"/>
    </location>
    <ligand>
        <name>S-adenosyl-L-methionine</name>
        <dbReference type="ChEBI" id="CHEBI:59789"/>
    </ligand>
</feature>